<gene>
    <name evidence="1" type="primary">secA</name>
    <name type="ordered locus">BF0983</name>
</gene>
<reference key="1">
    <citation type="journal article" date="2005" name="Science">
        <title>Extensive DNA inversions in the B. fragilis genome control variable gene expression.</title>
        <authorList>
            <person name="Cerdeno-Tarraga A.-M."/>
            <person name="Patrick S."/>
            <person name="Crossman L.C."/>
            <person name="Blakely G."/>
            <person name="Abratt V."/>
            <person name="Lennard N."/>
            <person name="Poxton I."/>
            <person name="Duerden B."/>
            <person name="Harris B."/>
            <person name="Quail M.A."/>
            <person name="Barron A."/>
            <person name="Clark L."/>
            <person name="Corton C."/>
            <person name="Doggett J."/>
            <person name="Holden M.T.G."/>
            <person name="Larke N."/>
            <person name="Line A."/>
            <person name="Lord A."/>
            <person name="Norbertczak H."/>
            <person name="Ormond D."/>
            <person name="Price C."/>
            <person name="Rabbinowitsch E."/>
            <person name="Woodward J."/>
            <person name="Barrell B.G."/>
            <person name="Parkhill J."/>
        </authorList>
    </citation>
    <scope>NUCLEOTIDE SEQUENCE [LARGE SCALE GENOMIC DNA]</scope>
    <source>
        <strain>ATCC 25285 / DSM 2151 / CCUG 4856 / JCM 11019 / LMG 10263 / NCTC 9343 / Onslow / VPI 2553 / EN-2</strain>
    </source>
</reference>
<accession>Q5LGL5</accession>
<keyword id="KW-0067">ATP-binding</keyword>
<keyword id="KW-0997">Cell inner membrane</keyword>
<keyword id="KW-1003">Cell membrane</keyword>
<keyword id="KW-0963">Cytoplasm</keyword>
<keyword id="KW-0472">Membrane</keyword>
<keyword id="KW-0479">Metal-binding</keyword>
<keyword id="KW-0547">Nucleotide-binding</keyword>
<keyword id="KW-0653">Protein transport</keyword>
<keyword id="KW-1278">Translocase</keyword>
<keyword id="KW-0811">Translocation</keyword>
<keyword id="KW-0813">Transport</keyword>
<keyword id="KW-0862">Zinc</keyword>
<organism>
    <name type="scientific">Bacteroides fragilis (strain ATCC 25285 / DSM 2151 / CCUG 4856 / JCM 11019 / LMG 10263 / NCTC 9343 / Onslow / VPI 2553 / EN-2)</name>
    <dbReference type="NCBI Taxonomy" id="272559"/>
    <lineage>
        <taxon>Bacteria</taxon>
        <taxon>Pseudomonadati</taxon>
        <taxon>Bacteroidota</taxon>
        <taxon>Bacteroidia</taxon>
        <taxon>Bacteroidales</taxon>
        <taxon>Bacteroidaceae</taxon>
        <taxon>Bacteroides</taxon>
    </lineage>
</organism>
<sequence>MGFNEFLSSIFGNKSTRDMKEIQPWVDKIKAAYPEVAKLDNDGLRAKTEELKEYIRNSASKERAKADELRAGIENVELEDREEVFAQIDKIEKEILEIYEKALDEVLPVAFSIVKESAKRFSENEEIVVTATDFDRKLAATKDFVRIEGDKAIWQNHWNAGGNDTVWNMVHYDVQLFGGVVLHKGKIAEMATGEGKTLVATLPVFLNALTGNGVHVVTVNDYLAKRDSEWMGPLYMFHGLSVDCIDRHQPNSDARRQAYLADITFGTNNEFGFDYLRDNMAISPKDLVQRQHNYAIVDEVDSVLIDDARTPLIISGPVPKGEDQLFDQLRPLVERLVEAQKVLATKYLSEAKKLINSDDKKEVEEGFLALFRSHKALPKNKALIKFLSEQGIKAGMLKTEEIYMEQNNKRMHEATDPLYFVIDEKLNSVDLTDKGVDLITGNSEDPTLFVLPDIAAQLSELENEHGLSDEQKLEKKDALLTNYAIKSERVHTINQLLKAYTMFEKDDEYVVIDGQVKIVDEQTGRIMEGRRYSDGLHQAIEAKEGVKVEAATQTFATITLQNYFRMYHKLSGMTGTAETEAGELWDIYKLDVVVIPTNRPIARKDMNDRVYKTKREKYKAVIEEIEQLVQAGRPVLVGTTSVEISEMLSKMLTMRKIEHNVLNAKLHQKEADIVAKAGLSGTVTIATNMAGRGTDIKLSPEVKAAGGLAIIGTERHESRRVDRQLRGRAGRQGDPGSSVFFVSLEDDLMRLFSSDRIASVMDKLGFQEGEMIEHKMISNSIERAQKKVEENNFGIRKRLLEYDDVMNKQRTVVYTKRRHALMGERIGMDIVNMIWDRCAAAIENNADYEECKLDLLQTLAMEAPFTEEEFRNEKKDKLADKTFDVAMANFKRKTERLAQIANPVIKQVYENQGHMYENILIPITDGKRMYNISCNLKAAYESESKEVVKSFEKSILLHVIDESWKENLRELDELKHSVQNASYEQKDPLLIYKLESVTLFDNMVNKINNQTVSILMRGQIPVAEPTEEQQEAARRVEVRQAAPEQRQDMSKYREQKQDLNDPNQQAAAQQDTREAVKREPIRAEKTVGRNDPCPCGSGKKYKNCHGRNS</sequence>
<feature type="chain" id="PRO_0000320732" description="Protein translocase subunit SecA">
    <location>
        <begin position="1"/>
        <end position="1109"/>
    </location>
</feature>
<feature type="region of interest" description="Disordered" evidence="2">
    <location>
        <begin position="1038"/>
        <end position="1109"/>
    </location>
</feature>
<feature type="compositionally biased region" description="Basic and acidic residues" evidence="2">
    <location>
        <begin position="1045"/>
        <end position="1059"/>
    </location>
</feature>
<feature type="compositionally biased region" description="Basic and acidic residues" evidence="2">
    <location>
        <begin position="1071"/>
        <end position="1088"/>
    </location>
</feature>
<feature type="compositionally biased region" description="Basic residues" evidence="2">
    <location>
        <begin position="1099"/>
        <end position="1109"/>
    </location>
</feature>
<feature type="binding site" evidence="1">
    <location>
        <position position="175"/>
    </location>
    <ligand>
        <name>ATP</name>
        <dbReference type="ChEBI" id="CHEBI:30616"/>
    </ligand>
</feature>
<feature type="binding site" evidence="1">
    <location>
        <begin position="193"/>
        <end position="197"/>
    </location>
    <ligand>
        <name>ATP</name>
        <dbReference type="ChEBI" id="CHEBI:30616"/>
    </ligand>
</feature>
<feature type="binding site" evidence="1">
    <location>
        <position position="695"/>
    </location>
    <ligand>
        <name>ATP</name>
        <dbReference type="ChEBI" id="CHEBI:30616"/>
    </ligand>
</feature>
<feature type="binding site" evidence="1">
    <location>
        <position position="1093"/>
    </location>
    <ligand>
        <name>Zn(2+)</name>
        <dbReference type="ChEBI" id="CHEBI:29105"/>
    </ligand>
</feature>
<feature type="binding site" evidence="1">
    <location>
        <position position="1095"/>
    </location>
    <ligand>
        <name>Zn(2+)</name>
        <dbReference type="ChEBI" id="CHEBI:29105"/>
    </ligand>
</feature>
<feature type="binding site" evidence="1">
    <location>
        <position position="1104"/>
    </location>
    <ligand>
        <name>Zn(2+)</name>
        <dbReference type="ChEBI" id="CHEBI:29105"/>
    </ligand>
</feature>
<feature type="binding site" evidence="1">
    <location>
        <position position="1105"/>
    </location>
    <ligand>
        <name>Zn(2+)</name>
        <dbReference type="ChEBI" id="CHEBI:29105"/>
    </ligand>
</feature>
<evidence type="ECO:0000255" key="1">
    <source>
        <dbReference type="HAMAP-Rule" id="MF_01382"/>
    </source>
</evidence>
<evidence type="ECO:0000256" key="2">
    <source>
        <dbReference type="SAM" id="MobiDB-lite"/>
    </source>
</evidence>
<comment type="function">
    <text evidence="1">Part of the Sec protein translocase complex. Interacts with the SecYEG preprotein conducting channel. Has a central role in coupling the hydrolysis of ATP to the transfer of proteins into and across the cell membrane, serving as an ATP-driven molecular motor driving the stepwise translocation of polypeptide chains across the membrane.</text>
</comment>
<comment type="catalytic activity">
    <reaction evidence="1">
        <text>ATP + H2O + cellular proteinSide 1 = ADP + phosphate + cellular proteinSide 2.</text>
        <dbReference type="EC" id="7.4.2.8"/>
    </reaction>
</comment>
<comment type="cofactor">
    <cofactor evidence="1">
        <name>Zn(2+)</name>
        <dbReference type="ChEBI" id="CHEBI:29105"/>
    </cofactor>
    <text evidence="1">May bind 1 zinc ion per subunit.</text>
</comment>
<comment type="subunit">
    <text evidence="1">Monomer and homodimer. Part of the essential Sec protein translocation apparatus which comprises SecA, SecYEG and auxiliary proteins SecDF. Other proteins may also be involved.</text>
</comment>
<comment type="subcellular location">
    <subcellularLocation>
        <location evidence="1">Cell inner membrane</location>
        <topology evidence="1">Peripheral membrane protein</topology>
        <orientation evidence="1">Cytoplasmic side</orientation>
    </subcellularLocation>
    <subcellularLocation>
        <location evidence="1">Cytoplasm</location>
    </subcellularLocation>
    <text evidence="1">Distribution is 50-50.</text>
</comment>
<comment type="similarity">
    <text evidence="1">Belongs to the SecA family.</text>
</comment>
<name>SECA_BACFN</name>
<dbReference type="EC" id="7.4.2.8" evidence="1"/>
<dbReference type="EMBL" id="CR626927">
    <property type="protein sequence ID" value="CAH06724.1"/>
    <property type="molecule type" value="Genomic_DNA"/>
</dbReference>
<dbReference type="RefSeq" id="WP_010992260.1">
    <property type="nucleotide sequence ID" value="NC_003228.3"/>
</dbReference>
<dbReference type="SMR" id="Q5LGL5"/>
<dbReference type="PaxDb" id="272559-BF9343_0943"/>
<dbReference type="GeneID" id="60368355"/>
<dbReference type="KEGG" id="bfs:BF9343_0943"/>
<dbReference type="eggNOG" id="COG0653">
    <property type="taxonomic scope" value="Bacteria"/>
</dbReference>
<dbReference type="HOGENOM" id="CLU_005314_3_0_10"/>
<dbReference type="Proteomes" id="UP000006731">
    <property type="component" value="Chromosome"/>
</dbReference>
<dbReference type="GO" id="GO:0031522">
    <property type="term" value="C:cell envelope Sec protein transport complex"/>
    <property type="evidence" value="ECO:0007669"/>
    <property type="project" value="TreeGrafter"/>
</dbReference>
<dbReference type="GO" id="GO:0005829">
    <property type="term" value="C:cytosol"/>
    <property type="evidence" value="ECO:0007669"/>
    <property type="project" value="TreeGrafter"/>
</dbReference>
<dbReference type="GO" id="GO:0005886">
    <property type="term" value="C:plasma membrane"/>
    <property type="evidence" value="ECO:0007669"/>
    <property type="project" value="UniProtKB-SubCell"/>
</dbReference>
<dbReference type="GO" id="GO:0005524">
    <property type="term" value="F:ATP binding"/>
    <property type="evidence" value="ECO:0007669"/>
    <property type="project" value="UniProtKB-UniRule"/>
</dbReference>
<dbReference type="GO" id="GO:0046872">
    <property type="term" value="F:metal ion binding"/>
    <property type="evidence" value="ECO:0007669"/>
    <property type="project" value="UniProtKB-KW"/>
</dbReference>
<dbReference type="GO" id="GO:0008564">
    <property type="term" value="F:protein-exporting ATPase activity"/>
    <property type="evidence" value="ECO:0007669"/>
    <property type="project" value="UniProtKB-EC"/>
</dbReference>
<dbReference type="GO" id="GO:0065002">
    <property type="term" value="P:intracellular protein transmembrane transport"/>
    <property type="evidence" value="ECO:0007669"/>
    <property type="project" value="UniProtKB-UniRule"/>
</dbReference>
<dbReference type="GO" id="GO:0017038">
    <property type="term" value="P:protein import"/>
    <property type="evidence" value="ECO:0007669"/>
    <property type="project" value="InterPro"/>
</dbReference>
<dbReference type="GO" id="GO:0006605">
    <property type="term" value="P:protein targeting"/>
    <property type="evidence" value="ECO:0007669"/>
    <property type="project" value="UniProtKB-UniRule"/>
</dbReference>
<dbReference type="GO" id="GO:0043952">
    <property type="term" value="P:protein transport by the Sec complex"/>
    <property type="evidence" value="ECO:0007669"/>
    <property type="project" value="TreeGrafter"/>
</dbReference>
<dbReference type="CDD" id="cd17928">
    <property type="entry name" value="DEXDc_SecA"/>
    <property type="match status" value="1"/>
</dbReference>
<dbReference type="CDD" id="cd18803">
    <property type="entry name" value="SF2_C_secA"/>
    <property type="match status" value="1"/>
</dbReference>
<dbReference type="FunFam" id="3.40.50.300:FF:000246">
    <property type="entry name" value="Preprotein translocase subunit SecA"/>
    <property type="match status" value="1"/>
</dbReference>
<dbReference type="FunFam" id="3.40.50.300:FF:000694">
    <property type="entry name" value="Preprotein translocase subunit SecA"/>
    <property type="match status" value="1"/>
</dbReference>
<dbReference type="FunFam" id="3.90.1440.10:FF:000005">
    <property type="entry name" value="Protein translocase subunit SecA"/>
    <property type="match status" value="1"/>
</dbReference>
<dbReference type="Gene3D" id="1.10.3060.10">
    <property type="entry name" value="Helical scaffold and wing domains of SecA"/>
    <property type="match status" value="1"/>
</dbReference>
<dbReference type="Gene3D" id="3.40.50.300">
    <property type="entry name" value="P-loop containing nucleotide triphosphate hydrolases"/>
    <property type="match status" value="3"/>
</dbReference>
<dbReference type="Gene3D" id="3.90.1440.10">
    <property type="entry name" value="SecA, preprotein cross-linking domain"/>
    <property type="match status" value="1"/>
</dbReference>
<dbReference type="HAMAP" id="MF_01382">
    <property type="entry name" value="SecA"/>
    <property type="match status" value="1"/>
</dbReference>
<dbReference type="InterPro" id="IPR014001">
    <property type="entry name" value="Helicase_ATP-bd"/>
</dbReference>
<dbReference type="InterPro" id="IPR001650">
    <property type="entry name" value="Helicase_C-like"/>
</dbReference>
<dbReference type="InterPro" id="IPR027417">
    <property type="entry name" value="P-loop_NTPase"/>
</dbReference>
<dbReference type="InterPro" id="IPR004027">
    <property type="entry name" value="SEC_C_motif"/>
</dbReference>
<dbReference type="InterPro" id="IPR000185">
    <property type="entry name" value="SecA"/>
</dbReference>
<dbReference type="InterPro" id="IPR020937">
    <property type="entry name" value="SecA_CS"/>
</dbReference>
<dbReference type="InterPro" id="IPR011115">
    <property type="entry name" value="SecA_DEAD"/>
</dbReference>
<dbReference type="InterPro" id="IPR014018">
    <property type="entry name" value="SecA_motor_DEAD"/>
</dbReference>
<dbReference type="InterPro" id="IPR011130">
    <property type="entry name" value="SecA_preprotein_X-link_dom"/>
</dbReference>
<dbReference type="InterPro" id="IPR044722">
    <property type="entry name" value="SecA_SF2_C"/>
</dbReference>
<dbReference type="InterPro" id="IPR011116">
    <property type="entry name" value="SecA_Wing/Scaffold"/>
</dbReference>
<dbReference type="InterPro" id="IPR036266">
    <property type="entry name" value="SecA_Wing/Scaffold_sf"/>
</dbReference>
<dbReference type="InterPro" id="IPR036670">
    <property type="entry name" value="SecA_X-link_sf"/>
</dbReference>
<dbReference type="NCBIfam" id="NF009536">
    <property type="entry name" value="PRK12901.1"/>
    <property type="match status" value="1"/>
</dbReference>
<dbReference type="PANTHER" id="PTHR30612:SF0">
    <property type="entry name" value="CHLOROPLAST PROTEIN-TRANSPORTING ATPASE"/>
    <property type="match status" value="1"/>
</dbReference>
<dbReference type="PANTHER" id="PTHR30612">
    <property type="entry name" value="SECA INNER MEMBRANE COMPONENT OF SEC PROTEIN SECRETION SYSTEM"/>
    <property type="match status" value="1"/>
</dbReference>
<dbReference type="Pfam" id="PF21090">
    <property type="entry name" value="P-loop_SecA"/>
    <property type="match status" value="1"/>
</dbReference>
<dbReference type="Pfam" id="PF02810">
    <property type="entry name" value="SEC-C"/>
    <property type="match status" value="1"/>
</dbReference>
<dbReference type="Pfam" id="PF07517">
    <property type="entry name" value="SecA_DEAD"/>
    <property type="match status" value="1"/>
</dbReference>
<dbReference type="Pfam" id="PF01043">
    <property type="entry name" value="SecA_PP_bind"/>
    <property type="match status" value="1"/>
</dbReference>
<dbReference type="Pfam" id="PF07516">
    <property type="entry name" value="SecA_SW"/>
    <property type="match status" value="1"/>
</dbReference>
<dbReference type="PRINTS" id="PR00906">
    <property type="entry name" value="SECA"/>
</dbReference>
<dbReference type="SMART" id="SM00957">
    <property type="entry name" value="SecA_DEAD"/>
    <property type="match status" value="1"/>
</dbReference>
<dbReference type="SMART" id="SM00958">
    <property type="entry name" value="SecA_PP_bind"/>
    <property type="match status" value="1"/>
</dbReference>
<dbReference type="SUPFAM" id="SSF81886">
    <property type="entry name" value="Helical scaffold and wing domains of SecA"/>
    <property type="match status" value="1"/>
</dbReference>
<dbReference type="SUPFAM" id="SSF52540">
    <property type="entry name" value="P-loop containing nucleoside triphosphate hydrolases"/>
    <property type="match status" value="2"/>
</dbReference>
<dbReference type="SUPFAM" id="SSF81767">
    <property type="entry name" value="Pre-protein crosslinking domain of SecA"/>
    <property type="match status" value="1"/>
</dbReference>
<dbReference type="PROSITE" id="PS01312">
    <property type="entry name" value="SECA"/>
    <property type="match status" value="1"/>
</dbReference>
<dbReference type="PROSITE" id="PS51196">
    <property type="entry name" value="SECA_MOTOR_DEAD"/>
    <property type="match status" value="1"/>
</dbReference>
<protein>
    <recommendedName>
        <fullName evidence="1">Protein translocase subunit SecA</fullName>
        <ecNumber evidence="1">7.4.2.8</ecNumber>
    </recommendedName>
</protein>
<proteinExistence type="inferred from homology"/>